<protein>
    <recommendedName>
        <fullName>Protein YPR117W</fullName>
    </recommendedName>
    <alternativeName>
        <fullName evidence="4">Bridge-like lipid transfer protein family member 2B</fullName>
        <shortName>BLTP2B</shortName>
    </alternativeName>
    <alternativeName>
        <fullName>Protein hobbit 2</fullName>
        <shortName>HOB2</shortName>
    </alternativeName>
</protein>
<proteinExistence type="evidence at protein level"/>
<sequence length="2489" mass="285904">MSMLPWSQIRDVSKLLLGFMLFIISIQKIASILMSWILMLRHSTIRKISFGYFFGTSIRRAFILTDFAQIYIGKITLRIGWKPGIVFHNVDLKLFGKDSHITAHSTKDSRTYFNPRDQTFTFVINRRVLSILKLVFSFSTFFHTLALTVPNGKQYKLNIGSITISHPHDDTIKLEAFLHDFTHPETKDTLNHTGFFMVCKIGKEDDTGSNCTKVILKNWKSSLKISDVCWHLPEKKGKNLHSEPVEPFSAGDDAEMLTSYRKMLKPFHYPLKTLNILDLKVENVKLIYKKKFTIRISSAQLYLESISILNNVSALELLPLNKPTWGDFELSLSANAVVVDIDGNTAVRIPFGNVILTSDILLFLLDNVPLRRTKVSSILNIINPSVFLTIHQVLEVLHLVDKFDSPETSSCTNTNDRSLNILDLDIDRLPSFNFELLMSNFISRLHISDEENVTFKVFSTHALFSRNNLSMTPKKGQVMQIRPDWPFAKTALVSDQLSNYIKIVGTSLSYLRIPTEQDANPVSIPVCGFERLDTFLDEFSNSKLIVQSTLRHSYVSLENIEVLHTLSRAFDKIYLLISSRTKRNAAHKANGGKLGDLNEAKKTFNWSLKLRMKDISCSLLVAGFLPKNLDPVEAENFNLSDVTRGAKVVFTESILLADSQEKNFTIIDASVYRFMDGTTYKPSPEVIIQFTNLLLSFNDSDEIHFSLPKIKFKMDVNIIWLWFYIRSIWIKFRPNSKLSRNSVSSVKSVNVLDRLRVDIGKMIIELTLPHNTEVLLIFERIGLSSSTKNLTIASLSAYVVSVYVKHIKVYVSLLNINDFELDTEELICKKSAVINTSLIHFHAEYHFRFYMITDNIVTLYKSFKQIKLAFSNLNEFKRLYPQQQFPKKVPNLHICCQDFLIDIEEDPFEQELGLILKVGVLEQRERLKKLEEFKEKLSTYEDMNVRLRSLYDTSRGQSFFPEFYANDQEYEQKAYLRLLENFSTSWIARYRKAKLSFYGMPYRVISREELGTKYHLFTRQKTSTVANLVVKDLDFKLGSPSFPLDNYMDFVYQYGKKVPKSTEYTLLIILGLKIKSALWELRLRDYPIPAISFPDTFTTGDVVFAEKMPAPCALHTVYVPFVSSAQRSPYNDANTIYGLHIIRTINSVKTYFNIRSMVTSSSSARITWGKSLQPGYESLMLWFDFLTKPLIDPSKKLGFWDKFRYLVHGKWIYEFSEESEIHLNIKGSHDPYKITDDGAGLAFCWSGGTTIYVHNSTDPKEFLKIESQRFQLAVPDFAKVSKFDKVFMKLDGRVIWTLGLLFEQGDISKAGDEERFLPNRPHYEIQLMNPDGVADLDHHDTYKGFRTSFIHMSFGVYSSEHGSINSLYLAPYALTHFFKWWNLFHTYTSGPIRQGRLFTDVLQNKTKFGRSLFTIAYQLHLKRLMVTHIYRHITTQYDLEKDRKITFTGLKGRFDSLKIDLHQKRVKLTHTNQKLNKSKPVWKFKMSRGEIDCAEADIRILSTLFDQEAVKEILTSGLDGILEDEPSRPITPQDVEYLRESDWYDYEDYIDLNQVPLGSSLPLKLEAIPLLYSPRISYFRKINDDGYVLAYPFGTEESHNCLIGKNHPELTQEKLATERKREIEEQLKLLHITLSELQSNKGGGSVSGNSERYARELKAEVAELNHRLHTVNTILSDLKISETIPGGNTDGDSSSSLSDTDVNLENAPPIQNRISLLRTNTVESFVSMRKASTMQVESTYDNRFMVHNIELKIDNKIRHHLLEYASSAFERKSMRFAVTYKSVTILKELLGNVLTGVRTSVEDYGSILEDDLASNSEFIEHFEKLIREVPSDDFDYVDNYLFRLISPQVQIKSDVERNAAVILAARDIEMGIIDIVQVYGKSGKRIPVDVDTIVETRYSAVSKDIQLFTLFKKDLEGPEGRFFHKNGYGSDKESDIWPPWIPLEMCFDGSLLDKHVFLKRRSMFLTYVAPNPLFFSANDTSAFSYDSRFRIAFPGLVLTSDCQQYCAVYAIAEDLLSFGSSLDEKVEKLSRILFTDEVRNNLENLDVSVVTALQERIKELYYTRAYLKLHEPRLFMKSGQELTFDIQTSTLKLTLLMTAIKKTYDRMGSGNRVIQKRLRWQVGTDELIWELYDESKTPFVTIGLGPSTFIRSETSDGTNSNKVSISSLQCFNQQENPVYTELLAPFYENSSYNKNAPMVEIFWILGPSVGGISDLQDLIVSLQPLIFKMDHKTSEKLMNYLFPKIEQTSIEPNSPELVPRSSTSSFFSSSPVLRHSLSNGSLSVYDAKDVDSWDLRSIQSKEGIKKHKGDHRKLSASLFVQPDYNINEMVKRSGTFFNVKSIIIRKTLMSVCYKGSHSLLTDVNNLIVRVPVLKYHNKLWSREEFFTALKRDVVRIVLQHLGNIIGNKFLPHKKENKKKTSMEIHRLLSPDSQNRDNSHILEVEGHNSFYSSTHSSDIRSINSDETYNENDGNGVKPFYPVTSEFSKNK</sequence>
<reference key="1">
    <citation type="journal article" date="1997" name="Nature">
        <title>The nucleotide sequence of Saccharomyces cerevisiae chromosome XVI.</title>
        <authorList>
            <person name="Bussey H."/>
            <person name="Storms R.K."/>
            <person name="Ahmed A."/>
            <person name="Albermann K."/>
            <person name="Allen E."/>
            <person name="Ansorge W."/>
            <person name="Araujo R."/>
            <person name="Aparicio A."/>
            <person name="Barrell B.G."/>
            <person name="Badcock K."/>
            <person name="Benes V."/>
            <person name="Botstein D."/>
            <person name="Bowman S."/>
            <person name="Brueckner M."/>
            <person name="Carpenter J."/>
            <person name="Cherry J.M."/>
            <person name="Chung E."/>
            <person name="Churcher C.M."/>
            <person name="Coster F."/>
            <person name="Davis K."/>
            <person name="Davis R.W."/>
            <person name="Dietrich F.S."/>
            <person name="Delius H."/>
            <person name="DiPaolo T."/>
            <person name="Dubois E."/>
            <person name="Duesterhoeft A."/>
            <person name="Duncan M."/>
            <person name="Floeth M."/>
            <person name="Fortin N."/>
            <person name="Friesen J.D."/>
            <person name="Fritz C."/>
            <person name="Goffeau A."/>
            <person name="Hall J."/>
            <person name="Hebling U."/>
            <person name="Heumann K."/>
            <person name="Hilbert H."/>
            <person name="Hillier L.W."/>
            <person name="Hunicke-Smith S."/>
            <person name="Hyman R.W."/>
            <person name="Johnston M."/>
            <person name="Kalman S."/>
            <person name="Kleine K."/>
            <person name="Komp C."/>
            <person name="Kurdi O."/>
            <person name="Lashkari D."/>
            <person name="Lew H."/>
            <person name="Lin A."/>
            <person name="Lin D."/>
            <person name="Louis E.J."/>
            <person name="Marathe R."/>
            <person name="Messenguy F."/>
            <person name="Mewes H.-W."/>
            <person name="Mirtipati S."/>
            <person name="Moestl D."/>
            <person name="Mueller-Auer S."/>
            <person name="Namath A."/>
            <person name="Nentwich U."/>
            <person name="Oefner P."/>
            <person name="Pearson D."/>
            <person name="Petel F.X."/>
            <person name="Pohl T.M."/>
            <person name="Purnelle B."/>
            <person name="Rajandream M.A."/>
            <person name="Rechmann S."/>
            <person name="Rieger M."/>
            <person name="Riles L."/>
            <person name="Roberts D."/>
            <person name="Schaefer M."/>
            <person name="Scharfe M."/>
            <person name="Scherens B."/>
            <person name="Schramm S."/>
            <person name="Schroeder M."/>
            <person name="Sdicu A.-M."/>
            <person name="Tettelin H."/>
            <person name="Urrestarazu L.A."/>
            <person name="Ushinsky S."/>
            <person name="Vierendeels F."/>
            <person name="Vissers S."/>
            <person name="Voss H."/>
            <person name="Walsh S.V."/>
            <person name="Wambutt R."/>
            <person name="Wang Y."/>
            <person name="Wedler E."/>
            <person name="Wedler H."/>
            <person name="Winnett E."/>
            <person name="Zhong W.-W."/>
            <person name="Zollner A."/>
            <person name="Vo D.H."/>
            <person name="Hani J."/>
        </authorList>
    </citation>
    <scope>NUCLEOTIDE SEQUENCE [LARGE SCALE GENOMIC DNA]</scope>
    <source>
        <strain>ATCC 204508 / S288c</strain>
    </source>
</reference>
<reference key="2">
    <citation type="journal article" date="2014" name="G3 (Bethesda)">
        <title>The reference genome sequence of Saccharomyces cerevisiae: Then and now.</title>
        <authorList>
            <person name="Engel S.R."/>
            <person name="Dietrich F.S."/>
            <person name="Fisk D.G."/>
            <person name="Binkley G."/>
            <person name="Balakrishnan R."/>
            <person name="Costanzo M.C."/>
            <person name="Dwight S.S."/>
            <person name="Hitz B.C."/>
            <person name="Karra K."/>
            <person name="Nash R.S."/>
            <person name="Weng S."/>
            <person name="Wong E.D."/>
            <person name="Lloyd P."/>
            <person name="Skrzypek M.S."/>
            <person name="Miyasato S.R."/>
            <person name="Simison M."/>
            <person name="Cherry J.M."/>
        </authorList>
    </citation>
    <scope>GENOME REANNOTATION</scope>
    <source>
        <strain>ATCC 204508 / S288c</strain>
    </source>
</reference>
<reference key="3">
    <citation type="journal article" date="2008" name="Mol. Cell. Proteomics">
        <title>A multidimensional chromatography technology for in-depth phosphoproteome analysis.</title>
        <authorList>
            <person name="Albuquerque C.P."/>
            <person name="Smolka M.B."/>
            <person name="Payne S.H."/>
            <person name="Bafna V."/>
            <person name="Eng J."/>
            <person name="Zhou H."/>
        </authorList>
    </citation>
    <scope>PHOSPHORYLATION [LARGE SCALE ANALYSIS] AT SER-2254</scope>
    <scope>IDENTIFICATION BY MASS SPECTROMETRY [LARGE SCALE ANALYSIS]</scope>
</reference>
<reference key="4">
    <citation type="journal article" date="2009" name="Science">
        <title>Global analysis of Cdk1 substrate phosphorylation sites provides insights into evolution.</title>
        <authorList>
            <person name="Holt L.J."/>
            <person name="Tuch B.B."/>
            <person name="Villen J."/>
            <person name="Johnson A.D."/>
            <person name="Gygi S.P."/>
            <person name="Morgan D.O."/>
        </authorList>
    </citation>
    <scope>PHOSPHORYLATION [LARGE SCALE ANALYSIS] AT SER-2278</scope>
    <scope>IDENTIFICATION BY MASS SPECTROMETRY [LARGE SCALE ANALYSIS]</scope>
</reference>
<reference key="5">
    <citation type="journal article" date="2022" name="J. Cell Biol.">
        <title>Vps13-like proteins provide phosphatidylethanolamine for GPI anchor synthesis in the ER.</title>
        <authorList>
            <person name="Toulmay A."/>
            <person name="Whittle F.B."/>
            <person name="Yang J."/>
            <person name="Bai X."/>
            <person name="Diarra J."/>
            <person name="Banerjee S."/>
            <person name="Levine T.P."/>
            <person name="Golden A."/>
            <person name="Prinz W.A."/>
        </authorList>
    </citation>
    <scope>FUNCTION</scope>
    <scope>SUBCELLULAR LOCATION</scope>
</reference>
<reference key="6">
    <citation type="journal article" date="2022" name="Trends Cell Biol.">
        <title>A novel superfamily of bridge-like lipid transfer proteins.</title>
        <authorList>
            <person name="Neuman S.D."/>
            <person name="Levine T.P."/>
            <person name="Bashirullah A."/>
        </authorList>
    </citation>
    <scope>REVIEW OF FUNCTION</scope>
</reference>
<evidence type="ECO:0000255" key="1"/>
<evidence type="ECO:0000256" key="2">
    <source>
        <dbReference type="SAM" id="MobiDB-lite"/>
    </source>
</evidence>
<evidence type="ECO:0000269" key="3">
    <source>
    </source>
</evidence>
<evidence type="ECO:0000303" key="4">
    <source>
    </source>
</evidence>
<evidence type="ECO:0000305" key="5">
    <source>
    </source>
</evidence>
<evidence type="ECO:0000305" key="6">
    <source>
    </source>
</evidence>
<evidence type="ECO:0000312" key="7">
    <source>
        <dbReference type="SGD" id="S000006321"/>
    </source>
</evidence>
<evidence type="ECO:0007744" key="8">
    <source>
    </source>
</evidence>
<evidence type="ECO:0007744" key="9">
    <source>
    </source>
</evidence>
<organism>
    <name type="scientific">Saccharomyces cerevisiae (strain ATCC 204508 / S288c)</name>
    <name type="common">Baker's yeast</name>
    <dbReference type="NCBI Taxonomy" id="559292"/>
    <lineage>
        <taxon>Eukaryota</taxon>
        <taxon>Fungi</taxon>
        <taxon>Dikarya</taxon>
        <taxon>Ascomycota</taxon>
        <taxon>Saccharomycotina</taxon>
        <taxon>Saccharomycetes</taxon>
        <taxon>Saccharomycetales</taxon>
        <taxon>Saccharomycetaceae</taxon>
        <taxon>Saccharomyces</taxon>
    </lineage>
</organism>
<accession>Q06116</accession>
<accession>D6W4B6</accession>
<dbReference type="EMBL" id="U32445">
    <property type="protein sequence ID" value="AAB68087.1"/>
    <property type="molecule type" value="Genomic_DNA"/>
</dbReference>
<dbReference type="EMBL" id="BK006949">
    <property type="protein sequence ID" value="DAA11532.1"/>
    <property type="molecule type" value="Genomic_DNA"/>
</dbReference>
<dbReference type="PIR" id="S59782">
    <property type="entry name" value="S59782"/>
</dbReference>
<dbReference type="RefSeq" id="NP_015442.1">
    <property type="nucleotide sequence ID" value="NM_001184214.1"/>
</dbReference>
<dbReference type="SMR" id="Q06116"/>
<dbReference type="BioGRID" id="36284">
    <property type="interactions" value="169"/>
</dbReference>
<dbReference type="FunCoup" id="Q06116">
    <property type="interactions" value="292"/>
</dbReference>
<dbReference type="IntAct" id="Q06116">
    <property type="interactions" value="2"/>
</dbReference>
<dbReference type="MINT" id="Q06116"/>
<dbReference type="STRING" id="4932.YPR117W"/>
<dbReference type="GlyGen" id="Q06116">
    <property type="glycosylation" value="18 sites"/>
</dbReference>
<dbReference type="iPTMnet" id="Q06116"/>
<dbReference type="PaxDb" id="4932-YPR117W"/>
<dbReference type="PeptideAtlas" id="Q06116"/>
<dbReference type="EnsemblFungi" id="YPR117W_mRNA">
    <property type="protein sequence ID" value="YPR117W"/>
    <property type="gene ID" value="YPR117W"/>
</dbReference>
<dbReference type="GeneID" id="856233"/>
<dbReference type="KEGG" id="sce:YPR117W"/>
<dbReference type="AGR" id="SGD:S000006321"/>
<dbReference type="SGD" id="S000006321">
    <property type="gene designation" value="HOB2"/>
</dbReference>
<dbReference type="VEuPathDB" id="FungiDB:YPR117W"/>
<dbReference type="eggNOG" id="KOG1910">
    <property type="taxonomic scope" value="Eukaryota"/>
</dbReference>
<dbReference type="GeneTree" id="ENSGT00600000084481"/>
<dbReference type="HOGENOM" id="CLU_228568_0_0_1"/>
<dbReference type="InParanoid" id="Q06116"/>
<dbReference type="OMA" id="EYHFRFY"/>
<dbReference type="OrthoDB" id="1562405at2759"/>
<dbReference type="BioCyc" id="YEAST:G3O-34256-MONOMER"/>
<dbReference type="BioGRID-ORCS" id="856233">
    <property type="hits" value="1 hit in 10 CRISPR screens"/>
</dbReference>
<dbReference type="PRO" id="PR:Q06116"/>
<dbReference type="Proteomes" id="UP000002311">
    <property type="component" value="Chromosome XVI"/>
</dbReference>
<dbReference type="RNAct" id="Q06116">
    <property type="molecule type" value="protein"/>
</dbReference>
<dbReference type="GO" id="GO:0005789">
    <property type="term" value="C:endoplasmic reticulum membrane"/>
    <property type="evidence" value="ECO:0007669"/>
    <property type="project" value="UniProtKB-SubCell"/>
</dbReference>
<dbReference type="GO" id="GO:0031966">
    <property type="term" value="C:mitochondrial membrane"/>
    <property type="evidence" value="ECO:0007669"/>
    <property type="project" value="UniProtKB-SubCell"/>
</dbReference>
<dbReference type="GO" id="GO:0005886">
    <property type="term" value="C:plasma membrane"/>
    <property type="evidence" value="ECO:0007669"/>
    <property type="project" value="UniProtKB-SubCell"/>
</dbReference>
<dbReference type="InterPro" id="IPR019441">
    <property type="entry name" value="FMP27/BLTP2/Hobbit_GFWDK_RBG"/>
</dbReference>
<dbReference type="InterPro" id="IPR019415">
    <property type="entry name" value="FMP27_SW_RBG"/>
</dbReference>
<dbReference type="InterPro" id="IPR019449">
    <property type="entry name" value="FMP27_WPPW_RBG"/>
</dbReference>
<dbReference type="InterPro" id="IPR045167">
    <property type="entry name" value="Hobbit"/>
</dbReference>
<dbReference type="PANTHER" id="PTHR15678">
    <property type="entry name" value="ANTIGEN MLAA-22-RELATED"/>
    <property type="match status" value="1"/>
</dbReference>
<dbReference type="PANTHER" id="PTHR15678:SF6">
    <property type="entry name" value="BRIDGE-LIKE LIPID TRANSFER PROTEIN FAMILY MEMBER 2"/>
    <property type="match status" value="1"/>
</dbReference>
<dbReference type="Pfam" id="PF10344">
    <property type="entry name" value="Hobbit"/>
    <property type="match status" value="1"/>
</dbReference>
<dbReference type="SMART" id="SM01214">
    <property type="entry name" value="Fmp27_GFWDK"/>
    <property type="match status" value="1"/>
</dbReference>
<dbReference type="SMART" id="SM01215">
    <property type="entry name" value="Fmp27_SW"/>
    <property type="match status" value="1"/>
</dbReference>
<dbReference type="SMART" id="SM01216">
    <property type="entry name" value="Fmp27_WPPW"/>
    <property type="match status" value="1"/>
</dbReference>
<keyword id="KW-1003">Cell membrane</keyword>
<keyword id="KW-0175">Coiled coil</keyword>
<keyword id="KW-0256">Endoplasmic reticulum</keyword>
<keyword id="KW-0325">Glycoprotein</keyword>
<keyword id="KW-0472">Membrane</keyword>
<keyword id="KW-0496">Mitochondrion</keyword>
<keyword id="KW-0597">Phosphoprotein</keyword>
<keyword id="KW-1185">Reference proteome</keyword>
<keyword id="KW-0812">Transmembrane</keyword>
<keyword id="KW-1133">Transmembrane helix</keyword>
<feature type="chain" id="PRO_0000257827" description="Protein YPR117W">
    <location>
        <begin position="1"/>
        <end position="2489"/>
    </location>
</feature>
<feature type="transmembrane region" description="Helical" evidence="1">
    <location>
        <begin position="19"/>
        <end position="39"/>
    </location>
</feature>
<feature type="transmembrane region" description="Helical" evidence="1">
    <location>
        <begin position="128"/>
        <end position="148"/>
    </location>
</feature>
<feature type="region of interest" description="Disordered" evidence="2">
    <location>
        <begin position="1685"/>
        <end position="1704"/>
    </location>
</feature>
<feature type="region of interest" description="Disordered" evidence="2">
    <location>
        <begin position="2451"/>
        <end position="2489"/>
    </location>
</feature>
<feature type="coiled-coil region" evidence="1">
    <location>
        <begin position="1610"/>
        <end position="1676"/>
    </location>
</feature>
<feature type="compositionally biased region" description="Low complexity" evidence="2">
    <location>
        <begin position="1690"/>
        <end position="1704"/>
    </location>
</feature>
<feature type="compositionally biased region" description="Polar residues" evidence="2">
    <location>
        <begin position="2451"/>
        <end position="2471"/>
    </location>
</feature>
<feature type="modified residue" description="Phosphoserine" evidence="8">
    <location>
        <position position="2254"/>
    </location>
</feature>
<feature type="modified residue" description="Phosphoserine" evidence="9">
    <location>
        <position position="2278"/>
    </location>
</feature>
<feature type="glycosylation site" description="N-linked (GlcNAc...) asparagine" evidence="1">
    <location>
        <position position="191"/>
    </location>
</feature>
<feature type="glycosylation site" description="N-linked (GlcNAc...) asparagine" evidence="1">
    <location>
        <position position="210"/>
    </location>
</feature>
<feature type="glycosylation site" description="N-linked (GlcNAc...) asparagine" evidence="1">
    <location>
        <position position="311"/>
    </location>
</feature>
<feature type="glycosylation site" description="N-linked (GlcNAc...) asparagine" evidence="1">
    <location>
        <position position="452"/>
    </location>
</feature>
<feature type="glycosylation site" description="N-linked (GlcNAc...) asparagine" evidence="1">
    <location>
        <position position="468"/>
    </location>
</feature>
<feature type="glycosylation site" description="N-linked (GlcNAc...) asparagine" evidence="1">
    <location>
        <position position="605"/>
    </location>
</feature>
<feature type="glycosylation site" description="N-linked (GlcNAc...) asparagine" evidence="1">
    <location>
        <position position="638"/>
    </location>
</feature>
<feature type="glycosylation site" description="N-linked (GlcNAc...) asparagine" evidence="1">
    <location>
        <position position="663"/>
    </location>
</feature>
<feature type="glycosylation site" description="N-linked (GlcNAc...) asparagine" evidence="1">
    <location>
        <position position="698"/>
    </location>
</feature>
<feature type="glycosylation site" description="N-linked (GlcNAc...) asparagine" evidence="1">
    <location>
        <position position="789"/>
    </location>
</feature>
<feature type="glycosylation site" description="N-linked (GlcNAc...) asparagine" evidence="1">
    <location>
        <position position="835"/>
    </location>
</feature>
<feature type="glycosylation site" description="N-linked (GlcNAc...) asparagine" evidence="1">
    <location>
        <position position="981"/>
    </location>
</feature>
<feature type="glycosylation site" description="N-linked (GlcNAc...) asparagine" evidence="1">
    <location>
        <position position="1255"/>
    </location>
</feature>
<feature type="glycosylation site" description="N-linked (GlcNAc...) asparagine" evidence="1">
    <location>
        <position position="1404"/>
    </location>
</feature>
<feature type="glycosylation site" description="N-linked (GlcNAc...) asparagine" evidence="1">
    <location>
        <position position="1476"/>
    </location>
</feature>
<feature type="glycosylation site" description="N-linked (GlcNAc...) asparagine" evidence="1">
    <location>
        <position position="1978"/>
    </location>
</feature>
<feature type="glycosylation site" description="N-linked (GlcNAc...) asparagine" evidence="1">
    <location>
        <position position="2189"/>
    </location>
</feature>
<feature type="glycosylation site" description="N-linked (GlcNAc...) asparagine" evidence="1">
    <location>
        <position position="2279"/>
    </location>
</feature>
<name>HOB2_YEAST</name>
<comment type="function">
    <text evidence="5 6">Tube-forming lipid transport protein which may bind to phosphatidylinositols and may affect phosphatidylinositol-4,5-bisphosphate (PtdIns-4,5-P2) distribution.</text>
</comment>
<comment type="subcellular location">
    <subcellularLocation>
        <location evidence="3">Cell membrane</location>
        <topology evidence="1">Multi-pass membrane protein</topology>
    </subcellularLocation>
    <subcellularLocation>
        <location evidence="3">Endoplasmic reticulum membrane</location>
        <topology evidence="1">Multi-pass membrane protein</topology>
    </subcellularLocation>
    <subcellularLocation>
        <location evidence="3">Mitochondrion membrane</location>
        <topology evidence="1">Multi-pass membrane protein</topology>
    </subcellularLocation>
    <text evidence="3">Localizes to endoplasmic reticulum-cell membrane and some endoplasmic reticulum-mitochondria contact sites.</text>
</comment>
<gene>
    <name evidence="7" type="primary">HOB2</name>
    <name type="ordered locus">YPR117W</name>
</gene>